<dbReference type="EC" id="4.2.1.19" evidence="1"/>
<dbReference type="EMBL" id="CP000553">
    <property type="protein sequence ID" value="ABM74925.1"/>
    <property type="molecule type" value="Genomic_DNA"/>
</dbReference>
<dbReference type="RefSeq" id="WP_011294280.1">
    <property type="nucleotide sequence ID" value="NC_008819.1"/>
</dbReference>
<dbReference type="SMR" id="A2C0B5"/>
<dbReference type="KEGG" id="pme:NATL1_03611"/>
<dbReference type="eggNOG" id="COG0131">
    <property type="taxonomic scope" value="Bacteria"/>
</dbReference>
<dbReference type="HOGENOM" id="CLU_044308_3_0_3"/>
<dbReference type="UniPathway" id="UPA00031">
    <property type="reaction ID" value="UER00011"/>
</dbReference>
<dbReference type="Proteomes" id="UP000002592">
    <property type="component" value="Chromosome"/>
</dbReference>
<dbReference type="GO" id="GO:0005737">
    <property type="term" value="C:cytoplasm"/>
    <property type="evidence" value="ECO:0007669"/>
    <property type="project" value="UniProtKB-SubCell"/>
</dbReference>
<dbReference type="GO" id="GO:0004424">
    <property type="term" value="F:imidazoleglycerol-phosphate dehydratase activity"/>
    <property type="evidence" value="ECO:0007669"/>
    <property type="project" value="UniProtKB-UniRule"/>
</dbReference>
<dbReference type="GO" id="GO:0000105">
    <property type="term" value="P:L-histidine biosynthetic process"/>
    <property type="evidence" value="ECO:0007669"/>
    <property type="project" value="UniProtKB-UniRule"/>
</dbReference>
<dbReference type="CDD" id="cd07914">
    <property type="entry name" value="IGPD"/>
    <property type="match status" value="1"/>
</dbReference>
<dbReference type="FunFam" id="3.30.230.40:FF:000002">
    <property type="entry name" value="Imidazoleglycerol-phosphate dehydratase"/>
    <property type="match status" value="1"/>
</dbReference>
<dbReference type="FunFam" id="3.30.230.40:FF:000003">
    <property type="entry name" value="Imidazoleglycerol-phosphate dehydratase HisB"/>
    <property type="match status" value="1"/>
</dbReference>
<dbReference type="Gene3D" id="3.30.230.40">
    <property type="entry name" value="Imidazole glycerol phosphate dehydratase, domain 1"/>
    <property type="match status" value="2"/>
</dbReference>
<dbReference type="HAMAP" id="MF_00076">
    <property type="entry name" value="HisB"/>
    <property type="match status" value="1"/>
</dbReference>
<dbReference type="InterPro" id="IPR038494">
    <property type="entry name" value="IGPD_sf"/>
</dbReference>
<dbReference type="InterPro" id="IPR000807">
    <property type="entry name" value="ImidazoleglycerolP_deHydtase"/>
</dbReference>
<dbReference type="InterPro" id="IPR020565">
    <property type="entry name" value="ImidazoleglycerP_deHydtase_CS"/>
</dbReference>
<dbReference type="InterPro" id="IPR020568">
    <property type="entry name" value="Ribosomal_Su5_D2-typ_SF"/>
</dbReference>
<dbReference type="NCBIfam" id="NF002108">
    <property type="entry name" value="PRK00951.1-3"/>
    <property type="match status" value="1"/>
</dbReference>
<dbReference type="NCBIfam" id="NF002109">
    <property type="entry name" value="PRK00951.1-5"/>
    <property type="match status" value="1"/>
</dbReference>
<dbReference type="NCBIfam" id="NF002111">
    <property type="entry name" value="PRK00951.2-1"/>
    <property type="match status" value="1"/>
</dbReference>
<dbReference type="NCBIfam" id="NF002114">
    <property type="entry name" value="PRK00951.2-4"/>
    <property type="match status" value="1"/>
</dbReference>
<dbReference type="PANTHER" id="PTHR23133:SF2">
    <property type="entry name" value="IMIDAZOLEGLYCEROL-PHOSPHATE DEHYDRATASE"/>
    <property type="match status" value="1"/>
</dbReference>
<dbReference type="PANTHER" id="PTHR23133">
    <property type="entry name" value="IMIDAZOLEGLYCEROL-PHOSPHATE DEHYDRATASE HIS7"/>
    <property type="match status" value="1"/>
</dbReference>
<dbReference type="Pfam" id="PF00475">
    <property type="entry name" value="IGPD"/>
    <property type="match status" value="1"/>
</dbReference>
<dbReference type="SUPFAM" id="SSF54211">
    <property type="entry name" value="Ribosomal protein S5 domain 2-like"/>
    <property type="match status" value="2"/>
</dbReference>
<dbReference type="PROSITE" id="PS00954">
    <property type="entry name" value="IGP_DEHYDRATASE_1"/>
    <property type="match status" value="1"/>
</dbReference>
<dbReference type="PROSITE" id="PS00955">
    <property type="entry name" value="IGP_DEHYDRATASE_2"/>
    <property type="match status" value="1"/>
</dbReference>
<keyword id="KW-0028">Amino-acid biosynthesis</keyword>
<keyword id="KW-0963">Cytoplasm</keyword>
<keyword id="KW-0368">Histidine biosynthesis</keyword>
<keyword id="KW-0456">Lyase</keyword>
<gene>
    <name evidence="1" type="primary">hisB</name>
    <name type="ordered locus">NATL1_03611</name>
</gene>
<organism>
    <name type="scientific">Prochlorococcus marinus (strain NATL1A)</name>
    <dbReference type="NCBI Taxonomy" id="167555"/>
    <lineage>
        <taxon>Bacteria</taxon>
        <taxon>Bacillati</taxon>
        <taxon>Cyanobacteriota</taxon>
        <taxon>Cyanophyceae</taxon>
        <taxon>Synechococcales</taxon>
        <taxon>Prochlorococcaceae</taxon>
        <taxon>Prochlorococcus</taxon>
    </lineage>
</organism>
<proteinExistence type="inferred from homology"/>
<evidence type="ECO:0000255" key="1">
    <source>
        <dbReference type="HAMAP-Rule" id="MF_00076"/>
    </source>
</evidence>
<evidence type="ECO:0000256" key="2">
    <source>
        <dbReference type="SAM" id="MobiDB-lite"/>
    </source>
</evidence>
<name>HIS7_PROM1</name>
<accession>A2C0B5</accession>
<protein>
    <recommendedName>
        <fullName evidence="1">Imidazoleglycerol-phosphate dehydratase</fullName>
        <shortName evidence="1">IGPD</shortName>
        <ecNumber evidence="1">4.2.1.19</ecNumber>
    </recommendedName>
</protein>
<feature type="chain" id="PRO_1000010322" description="Imidazoleglycerol-phosphate dehydratase">
    <location>
        <begin position="1"/>
        <end position="203"/>
    </location>
</feature>
<feature type="region of interest" description="Disordered" evidence="2">
    <location>
        <begin position="184"/>
        <end position="203"/>
    </location>
</feature>
<comment type="catalytic activity">
    <reaction evidence="1">
        <text>D-erythro-1-(imidazol-4-yl)glycerol 3-phosphate = 3-(imidazol-4-yl)-2-oxopropyl phosphate + H2O</text>
        <dbReference type="Rhea" id="RHEA:11040"/>
        <dbReference type="ChEBI" id="CHEBI:15377"/>
        <dbReference type="ChEBI" id="CHEBI:57766"/>
        <dbReference type="ChEBI" id="CHEBI:58278"/>
        <dbReference type="EC" id="4.2.1.19"/>
    </reaction>
</comment>
<comment type="pathway">
    <text evidence="1">Amino-acid biosynthesis; L-histidine biosynthesis; L-histidine from 5-phospho-alpha-D-ribose 1-diphosphate: step 6/9.</text>
</comment>
<comment type="subcellular location">
    <subcellularLocation>
        <location evidence="1">Cytoplasm</location>
    </subcellularLocation>
</comment>
<comment type="similarity">
    <text evidence="1">Belongs to the imidazoleglycerol-phosphate dehydratase family.</text>
</comment>
<reference key="1">
    <citation type="journal article" date="2007" name="PLoS Genet.">
        <title>Patterns and implications of gene gain and loss in the evolution of Prochlorococcus.</title>
        <authorList>
            <person name="Kettler G.C."/>
            <person name="Martiny A.C."/>
            <person name="Huang K."/>
            <person name="Zucker J."/>
            <person name="Coleman M.L."/>
            <person name="Rodrigue S."/>
            <person name="Chen F."/>
            <person name="Lapidus A."/>
            <person name="Ferriera S."/>
            <person name="Johnson J."/>
            <person name="Steglich C."/>
            <person name="Church G.M."/>
            <person name="Richardson P."/>
            <person name="Chisholm S.W."/>
        </authorList>
    </citation>
    <scope>NUCLEOTIDE SEQUENCE [LARGE SCALE GENOMIC DNA]</scope>
    <source>
        <strain>NATL1A</strain>
    </source>
</reference>
<sequence length="203" mass="22187">MEKTREGEIRRETKETDVFVKIDLDGSGKCSANTGIGFLDHMIQQLSSHGLFDIEVRANGDTHIDDHHTNEDVGIAIGQALSKALGDRVGIKRFGHFLAPLDEALIQVVVDCSGRPHLSFSLDIPSQKVGTYDTELVKEFFGAVVSNGGLTLHIRQLAGNNTHHIIEATFKSFARALRMATEIDPRRSSQIPSSKGVLEQAGQ</sequence>